<feature type="chain" id="PRO_0000112244" description="Carbamoyl phosphate synthase small chain">
    <location>
        <begin position="1"/>
        <end position="388"/>
    </location>
</feature>
<feature type="domain" description="Glutamine amidotransferase type-1" evidence="1">
    <location>
        <begin position="196"/>
        <end position="382"/>
    </location>
</feature>
<feature type="region of interest" description="CPSase" evidence="1">
    <location>
        <begin position="1"/>
        <end position="192"/>
    </location>
</feature>
<feature type="active site" description="Nucleophile" evidence="1">
    <location>
        <position position="272"/>
    </location>
</feature>
<feature type="active site" evidence="1">
    <location>
        <position position="355"/>
    </location>
</feature>
<feature type="active site" evidence="1">
    <location>
        <position position="357"/>
    </location>
</feature>
<feature type="binding site" evidence="1">
    <location>
        <position position="51"/>
    </location>
    <ligand>
        <name>L-glutamine</name>
        <dbReference type="ChEBI" id="CHEBI:58359"/>
    </ligand>
</feature>
<feature type="binding site" evidence="1">
    <location>
        <position position="244"/>
    </location>
    <ligand>
        <name>L-glutamine</name>
        <dbReference type="ChEBI" id="CHEBI:58359"/>
    </ligand>
</feature>
<feature type="binding site" evidence="1">
    <location>
        <position position="246"/>
    </location>
    <ligand>
        <name>L-glutamine</name>
        <dbReference type="ChEBI" id="CHEBI:58359"/>
    </ligand>
</feature>
<feature type="binding site" evidence="1">
    <location>
        <position position="273"/>
    </location>
    <ligand>
        <name>L-glutamine</name>
        <dbReference type="ChEBI" id="CHEBI:58359"/>
    </ligand>
</feature>
<feature type="binding site" evidence="1">
    <location>
        <position position="276"/>
    </location>
    <ligand>
        <name>L-glutamine</name>
        <dbReference type="ChEBI" id="CHEBI:58359"/>
    </ligand>
</feature>
<feature type="binding site" evidence="1">
    <location>
        <position position="312"/>
    </location>
    <ligand>
        <name>L-glutamine</name>
        <dbReference type="ChEBI" id="CHEBI:58359"/>
    </ligand>
</feature>
<feature type="binding site" evidence="1">
    <location>
        <position position="315"/>
    </location>
    <ligand>
        <name>L-glutamine</name>
        <dbReference type="ChEBI" id="CHEBI:58359"/>
    </ligand>
</feature>
<organism>
    <name type="scientific">Nostoc sp. (strain PCC 7120 / SAG 25.82 / UTEX 2576)</name>
    <dbReference type="NCBI Taxonomy" id="103690"/>
    <lineage>
        <taxon>Bacteria</taxon>
        <taxon>Bacillati</taxon>
        <taxon>Cyanobacteriota</taxon>
        <taxon>Cyanophyceae</taxon>
        <taxon>Nostocales</taxon>
        <taxon>Nostocaceae</taxon>
        <taxon>Nostoc</taxon>
    </lineage>
</organism>
<proteinExistence type="inferred from homology"/>
<evidence type="ECO:0000255" key="1">
    <source>
        <dbReference type="HAMAP-Rule" id="MF_01209"/>
    </source>
</evidence>
<comment type="function">
    <text evidence="1">Small subunit of the glutamine-dependent carbamoyl phosphate synthetase (CPSase). CPSase catalyzes the formation of carbamoyl phosphate from the ammonia moiety of glutamine, carbonate, and phosphate donated by ATP, constituting the first step of 2 biosynthetic pathways, one leading to arginine and/or urea and the other to pyrimidine nucleotides. The small subunit (glutamine amidotransferase) binds and cleaves glutamine to supply the large subunit with the substrate ammonia.</text>
</comment>
<comment type="catalytic activity">
    <reaction evidence="1">
        <text>hydrogencarbonate + L-glutamine + 2 ATP + H2O = carbamoyl phosphate + L-glutamate + 2 ADP + phosphate + 2 H(+)</text>
        <dbReference type="Rhea" id="RHEA:18633"/>
        <dbReference type="ChEBI" id="CHEBI:15377"/>
        <dbReference type="ChEBI" id="CHEBI:15378"/>
        <dbReference type="ChEBI" id="CHEBI:17544"/>
        <dbReference type="ChEBI" id="CHEBI:29985"/>
        <dbReference type="ChEBI" id="CHEBI:30616"/>
        <dbReference type="ChEBI" id="CHEBI:43474"/>
        <dbReference type="ChEBI" id="CHEBI:58228"/>
        <dbReference type="ChEBI" id="CHEBI:58359"/>
        <dbReference type="ChEBI" id="CHEBI:456216"/>
        <dbReference type="EC" id="6.3.5.5"/>
    </reaction>
</comment>
<comment type="catalytic activity">
    <molecule>Carbamoyl phosphate synthase small chain</molecule>
    <reaction evidence="1">
        <text>L-glutamine + H2O = L-glutamate + NH4(+)</text>
        <dbReference type="Rhea" id="RHEA:15889"/>
        <dbReference type="ChEBI" id="CHEBI:15377"/>
        <dbReference type="ChEBI" id="CHEBI:28938"/>
        <dbReference type="ChEBI" id="CHEBI:29985"/>
        <dbReference type="ChEBI" id="CHEBI:58359"/>
    </reaction>
</comment>
<comment type="pathway">
    <text evidence="1">Amino-acid biosynthesis; L-arginine biosynthesis; carbamoyl phosphate from bicarbonate: step 1/1.</text>
</comment>
<comment type="pathway">
    <text evidence="1">Pyrimidine metabolism; UMP biosynthesis via de novo pathway; (S)-dihydroorotate from bicarbonate: step 1/3.</text>
</comment>
<comment type="subunit">
    <text evidence="1">Composed of two chains; the small (or glutamine) chain promotes the hydrolysis of glutamine to ammonia, which is used by the large (or ammonia) chain to synthesize carbamoyl phosphate. Tetramer of heterodimers (alpha,beta)4.</text>
</comment>
<comment type="similarity">
    <text evidence="1">Belongs to the CarA family.</text>
</comment>
<gene>
    <name evidence="1" type="primary">carA</name>
    <name type="ordered locus">alr1155</name>
</gene>
<accession>Q8YXQ7</accession>
<sequence>MPLSDAMPALLVLADGTAYRGWSFGATGTTIGEVVFNTGMTGYQEVLTDPSYRGQIVVFTYPELGNTGVNPEDEESARPQVRGAIARNICHKPSNWRSTQSLPDYLKQHHIPGIFGIDTRALTRKIRMYGAMNGGISTEILDEAELLEQVQAAPNMAGLNLVREVTTSTVYEWSDPTTAVWEFNPDGTVKNGESLTVVALDFGVKRNILRRLASYGCRVIVVPADTSPEEILKYNPDGIFLSNGPGDPSAVTEGITTAKALLESEKPIFGICMGHQILGHALGAETFKLKFGHRGLNQPAGLTQRVEITSQNHSFAIDPDSLPEAVVEISHLNLNDRTVAGLRHKSLPIFSVQYHPEASPGPHDADYLFAQFVHQMRTTKQATTAEVS</sequence>
<keyword id="KW-0028">Amino-acid biosynthesis</keyword>
<keyword id="KW-0055">Arginine biosynthesis</keyword>
<keyword id="KW-0067">ATP-binding</keyword>
<keyword id="KW-0315">Glutamine amidotransferase</keyword>
<keyword id="KW-0436">Ligase</keyword>
<keyword id="KW-0547">Nucleotide-binding</keyword>
<keyword id="KW-0665">Pyrimidine biosynthesis</keyword>
<keyword id="KW-1185">Reference proteome</keyword>
<dbReference type="EC" id="6.3.5.5" evidence="1"/>
<dbReference type="EMBL" id="BA000019">
    <property type="protein sequence ID" value="BAB73112.1"/>
    <property type="molecule type" value="Genomic_DNA"/>
</dbReference>
<dbReference type="PIR" id="AH1950">
    <property type="entry name" value="AH1950"/>
</dbReference>
<dbReference type="RefSeq" id="WP_010995328.1">
    <property type="nucleotide sequence ID" value="NZ_RSCN01000008.1"/>
</dbReference>
<dbReference type="SMR" id="Q8YXQ7"/>
<dbReference type="STRING" id="103690.gene:10493169"/>
<dbReference type="KEGG" id="ana:alr1155"/>
<dbReference type="eggNOG" id="COG0505">
    <property type="taxonomic scope" value="Bacteria"/>
</dbReference>
<dbReference type="OrthoDB" id="9804328at2"/>
<dbReference type="UniPathway" id="UPA00068">
    <property type="reaction ID" value="UER00171"/>
</dbReference>
<dbReference type="UniPathway" id="UPA00070">
    <property type="reaction ID" value="UER00115"/>
</dbReference>
<dbReference type="Proteomes" id="UP000002483">
    <property type="component" value="Chromosome"/>
</dbReference>
<dbReference type="GO" id="GO:0005524">
    <property type="term" value="F:ATP binding"/>
    <property type="evidence" value="ECO:0007669"/>
    <property type="project" value="UniProtKB-UniRule"/>
</dbReference>
<dbReference type="GO" id="GO:0004088">
    <property type="term" value="F:carbamoyl-phosphate synthase (glutamine-hydrolyzing) activity"/>
    <property type="evidence" value="ECO:0007669"/>
    <property type="project" value="UniProtKB-UniRule"/>
</dbReference>
<dbReference type="GO" id="GO:0004359">
    <property type="term" value="F:glutaminase activity"/>
    <property type="evidence" value="ECO:0007669"/>
    <property type="project" value="RHEA"/>
</dbReference>
<dbReference type="GO" id="GO:0006207">
    <property type="term" value="P:'de novo' pyrimidine nucleobase biosynthetic process"/>
    <property type="evidence" value="ECO:0007669"/>
    <property type="project" value="InterPro"/>
</dbReference>
<dbReference type="GO" id="GO:0044205">
    <property type="term" value="P:'de novo' UMP biosynthetic process"/>
    <property type="evidence" value="ECO:0007669"/>
    <property type="project" value="UniProtKB-UniRule"/>
</dbReference>
<dbReference type="GO" id="GO:0006541">
    <property type="term" value="P:glutamine metabolic process"/>
    <property type="evidence" value="ECO:0007669"/>
    <property type="project" value="InterPro"/>
</dbReference>
<dbReference type="GO" id="GO:0006526">
    <property type="term" value="P:L-arginine biosynthetic process"/>
    <property type="evidence" value="ECO:0007669"/>
    <property type="project" value="UniProtKB-UniRule"/>
</dbReference>
<dbReference type="CDD" id="cd01744">
    <property type="entry name" value="GATase1_CPSase"/>
    <property type="match status" value="1"/>
</dbReference>
<dbReference type="FunFam" id="3.50.30.20:FF:000001">
    <property type="entry name" value="Carbamoyl-phosphate synthase small chain"/>
    <property type="match status" value="1"/>
</dbReference>
<dbReference type="Gene3D" id="3.40.50.880">
    <property type="match status" value="1"/>
</dbReference>
<dbReference type="Gene3D" id="3.50.30.20">
    <property type="entry name" value="Carbamoyl-phosphate synthase small subunit, N-terminal domain"/>
    <property type="match status" value="1"/>
</dbReference>
<dbReference type="HAMAP" id="MF_01209">
    <property type="entry name" value="CPSase_S_chain"/>
    <property type="match status" value="1"/>
</dbReference>
<dbReference type="InterPro" id="IPR050472">
    <property type="entry name" value="Anth_synth/Amidotransfase"/>
</dbReference>
<dbReference type="InterPro" id="IPR006274">
    <property type="entry name" value="CarbamoylP_synth_ssu"/>
</dbReference>
<dbReference type="InterPro" id="IPR002474">
    <property type="entry name" value="CarbamoylP_synth_ssu_N"/>
</dbReference>
<dbReference type="InterPro" id="IPR036480">
    <property type="entry name" value="CarbP_synth_ssu_N_sf"/>
</dbReference>
<dbReference type="InterPro" id="IPR029062">
    <property type="entry name" value="Class_I_gatase-like"/>
</dbReference>
<dbReference type="InterPro" id="IPR035686">
    <property type="entry name" value="CPSase_GATase1"/>
</dbReference>
<dbReference type="InterPro" id="IPR017926">
    <property type="entry name" value="GATASE"/>
</dbReference>
<dbReference type="NCBIfam" id="TIGR01368">
    <property type="entry name" value="CPSaseIIsmall"/>
    <property type="match status" value="1"/>
</dbReference>
<dbReference type="NCBIfam" id="NF009475">
    <property type="entry name" value="PRK12838.1"/>
    <property type="match status" value="1"/>
</dbReference>
<dbReference type="PANTHER" id="PTHR43418:SF7">
    <property type="entry name" value="CARBAMOYL-PHOSPHATE SYNTHASE SMALL CHAIN"/>
    <property type="match status" value="1"/>
</dbReference>
<dbReference type="PANTHER" id="PTHR43418">
    <property type="entry name" value="MULTIFUNCTIONAL TRYPTOPHAN BIOSYNTHESIS PROTEIN-RELATED"/>
    <property type="match status" value="1"/>
</dbReference>
<dbReference type="Pfam" id="PF00988">
    <property type="entry name" value="CPSase_sm_chain"/>
    <property type="match status" value="1"/>
</dbReference>
<dbReference type="Pfam" id="PF00117">
    <property type="entry name" value="GATase"/>
    <property type="match status" value="1"/>
</dbReference>
<dbReference type="PRINTS" id="PR00097">
    <property type="entry name" value="ANTSNTHASEII"/>
</dbReference>
<dbReference type="PRINTS" id="PR00099">
    <property type="entry name" value="CPSGATASE"/>
</dbReference>
<dbReference type="PRINTS" id="PR00096">
    <property type="entry name" value="GATASE"/>
</dbReference>
<dbReference type="SMART" id="SM01097">
    <property type="entry name" value="CPSase_sm_chain"/>
    <property type="match status" value="1"/>
</dbReference>
<dbReference type="SUPFAM" id="SSF52021">
    <property type="entry name" value="Carbamoyl phosphate synthetase, small subunit N-terminal domain"/>
    <property type="match status" value="1"/>
</dbReference>
<dbReference type="SUPFAM" id="SSF52317">
    <property type="entry name" value="Class I glutamine amidotransferase-like"/>
    <property type="match status" value="1"/>
</dbReference>
<dbReference type="PROSITE" id="PS51273">
    <property type="entry name" value="GATASE_TYPE_1"/>
    <property type="match status" value="1"/>
</dbReference>
<name>CARA_NOSS1</name>
<protein>
    <recommendedName>
        <fullName evidence="1">Carbamoyl phosphate synthase small chain</fullName>
        <ecNumber evidence="1">6.3.5.5</ecNumber>
    </recommendedName>
    <alternativeName>
        <fullName evidence="1">Carbamoyl phosphate synthetase glutamine chain</fullName>
    </alternativeName>
</protein>
<reference key="1">
    <citation type="journal article" date="2001" name="DNA Res.">
        <title>Complete genomic sequence of the filamentous nitrogen-fixing cyanobacterium Anabaena sp. strain PCC 7120.</title>
        <authorList>
            <person name="Kaneko T."/>
            <person name="Nakamura Y."/>
            <person name="Wolk C.P."/>
            <person name="Kuritz T."/>
            <person name="Sasamoto S."/>
            <person name="Watanabe A."/>
            <person name="Iriguchi M."/>
            <person name="Ishikawa A."/>
            <person name="Kawashima K."/>
            <person name="Kimura T."/>
            <person name="Kishida Y."/>
            <person name="Kohara M."/>
            <person name="Matsumoto M."/>
            <person name="Matsuno A."/>
            <person name="Muraki A."/>
            <person name="Nakazaki N."/>
            <person name="Shimpo S."/>
            <person name="Sugimoto M."/>
            <person name="Takazawa M."/>
            <person name="Yamada M."/>
            <person name="Yasuda M."/>
            <person name="Tabata S."/>
        </authorList>
    </citation>
    <scope>NUCLEOTIDE SEQUENCE [LARGE SCALE GENOMIC DNA]</scope>
    <source>
        <strain>PCC 7120 / SAG 25.82 / UTEX 2576</strain>
    </source>
</reference>